<reference key="1">
    <citation type="submission" date="2008-04" db="EMBL/GenBank/DDBJ databases">
        <title>Complete sequence of Yersinia pseudotuberculosis PB1/+.</title>
        <authorList>
            <person name="Copeland A."/>
            <person name="Lucas S."/>
            <person name="Lapidus A."/>
            <person name="Glavina del Rio T."/>
            <person name="Dalin E."/>
            <person name="Tice H."/>
            <person name="Bruce D."/>
            <person name="Goodwin L."/>
            <person name="Pitluck S."/>
            <person name="Munk A.C."/>
            <person name="Brettin T."/>
            <person name="Detter J.C."/>
            <person name="Han C."/>
            <person name="Tapia R."/>
            <person name="Schmutz J."/>
            <person name="Larimer F."/>
            <person name="Land M."/>
            <person name="Hauser L."/>
            <person name="Challacombe J.F."/>
            <person name="Green L."/>
            <person name="Lindler L.E."/>
            <person name="Nikolich M.P."/>
            <person name="Richardson P."/>
        </authorList>
    </citation>
    <scope>NUCLEOTIDE SEQUENCE [LARGE SCALE GENOMIC DNA]</scope>
    <source>
        <strain>PB1/+</strain>
    </source>
</reference>
<dbReference type="EC" id="2.3.1.117" evidence="1"/>
<dbReference type="EMBL" id="CP001048">
    <property type="protein sequence ID" value="ACC90081.1"/>
    <property type="molecule type" value="Genomic_DNA"/>
</dbReference>
<dbReference type="RefSeq" id="WP_011192864.1">
    <property type="nucleotide sequence ID" value="NZ_CP009780.1"/>
</dbReference>
<dbReference type="SMR" id="B2JZ37"/>
<dbReference type="KEGG" id="ypb:YPTS_3126"/>
<dbReference type="PATRIC" id="fig|502801.10.peg.2558"/>
<dbReference type="UniPathway" id="UPA00034">
    <property type="reaction ID" value="UER00019"/>
</dbReference>
<dbReference type="GO" id="GO:0005737">
    <property type="term" value="C:cytoplasm"/>
    <property type="evidence" value="ECO:0007669"/>
    <property type="project" value="UniProtKB-SubCell"/>
</dbReference>
<dbReference type="GO" id="GO:0008666">
    <property type="term" value="F:2,3,4,5-tetrahydropyridine-2,6-dicarboxylate N-succinyltransferase activity"/>
    <property type="evidence" value="ECO:0007669"/>
    <property type="project" value="UniProtKB-UniRule"/>
</dbReference>
<dbReference type="GO" id="GO:0016779">
    <property type="term" value="F:nucleotidyltransferase activity"/>
    <property type="evidence" value="ECO:0007669"/>
    <property type="project" value="TreeGrafter"/>
</dbReference>
<dbReference type="GO" id="GO:0019877">
    <property type="term" value="P:diaminopimelate biosynthetic process"/>
    <property type="evidence" value="ECO:0007669"/>
    <property type="project" value="UniProtKB-UniRule"/>
</dbReference>
<dbReference type="GO" id="GO:0009089">
    <property type="term" value="P:lysine biosynthetic process via diaminopimelate"/>
    <property type="evidence" value="ECO:0007669"/>
    <property type="project" value="UniProtKB-UniRule"/>
</dbReference>
<dbReference type="CDD" id="cd03350">
    <property type="entry name" value="LbH_THP_succinylT"/>
    <property type="match status" value="1"/>
</dbReference>
<dbReference type="FunFam" id="2.160.10.10:FF:000004">
    <property type="entry name" value="2,3,4,5-tetrahydropyridine-2,6-dicarboxylate N-succinyltransferase"/>
    <property type="match status" value="1"/>
</dbReference>
<dbReference type="Gene3D" id="2.160.10.10">
    <property type="entry name" value="Hexapeptide repeat proteins"/>
    <property type="match status" value="1"/>
</dbReference>
<dbReference type="Gene3D" id="1.10.166.10">
    <property type="entry name" value="Tetrahydrodipicolinate-N-succinyltransferase, N-terminal domain"/>
    <property type="match status" value="1"/>
</dbReference>
<dbReference type="HAMAP" id="MF_00811">
    <property type="entry name" value="DapD"/>
    <property type="match status" value="1"/>
</dbReference>
<dbReference type="InterPro" id="IPR005664">
    <property type="entry name" value="DapD_Trfase_Hexpep_rpt_fam"/>
</dbReference>
<dbReference type="InterPro" id="IPR001451">
    <property type="entry name" value="Hexapep"/>
</dbReference>
<dbReference type="InterPro" id="IPR018357">
    <property type="entry name" value="Hexapep_transf_CS"/>
</dbReference>
<dbReference type="InterPro" id="IPR023180">
    <property type="entry name" value="THP_succinylTrfase_dom1"/>
</dbReference>
<dbReference type="InterPro" id="IPR037133">
    <property type="entry name" value="THP_succinylTrfase_N_sf"/>
</dbReference>
<dbReference type="InterPro" id="IPR011004">
    <property type="entry name" value="Trimer_LpxA-like_sf"/>
</dbReference>
<dbReference type="NCBIfam" id="TIGR00965">
    <property type="entry name" value="dapD"/>
    <property type="match status" value="1"/>
</dbReference>
<dbReference type="NCBIfam" id="NF008808">
    <property type="entry name" value="PRK11830.1"/>
    <property type="match status" value="1"/>
</dbReference>
<dbReference type="PANTHER" id="PTHR19136:SF52">
    <property type="entry name" value="2,3,4,5-TETRAHYDROPYRIDINE-2,6-DICARBOXYLATE N-SUCCINYLTRANSFERASE"/>
    <property type="match status" value="1"/>
</dbReference>
<dbReference type="PANTHER" id="PTHR19136">
    <property type="entry name" value="MOLYBDENUM COFACTOR GUANYLYLTRANSFERASE"/>
    <property type="match status" value="1"/>
</dbReference>
<dbReference type="Pfam" id="PF14602">
    <property type="entry name" value="Hexapep_2"/>
    <property type="match status" value="1"/>
</dbReference>
<dbReference type="Pfam" id="PF14805">
    <property type="entry name" value="THDPS_N_2"/>
    <property type="match status" value="1"/>
</dbReference>
<dbReference type="SUPFAM" id="SSF51161">
    <property type="entry name" value="Trimeric LpxA-like enzymes"/>
    <property type="match status" value="1"/>
</dbReference>
<dbReference type="PROSITE" id="PS00101">
    <property type="entry name" value="HEXAPEP_TRANSFERASES"/>
    <property type="match status" value="1"/>
</dbReference>
<comment type="catalytic activity">
    <reaction evidence="1">
        <text>(S)-2,3,4,5-tetrahydrodipicolinate + succinyl-CoA + H2O = (S)-2-succinylamino-6-oxoheptanedioate + CoA</text>
        <dbReference type="Rhea" id="RHEA:17325"/>
        <dbReference type="ChEBI" id="CHEBI:15377"/>
        <dbReference type="ChEBI" id="CHEBI:15685"/>
        <dbReference type="ChEBI" id="CHEBI:16845"/>
        <dbReference type="ChEBI" id="CHEBI:57287"/>
        <dbReference type="ChEBI" id="CHEBI:57292"/>
        <dbReference type="EC" id="2.3.1.117"/>
    </reaction>
</comment>
<comment type="pathway">
    <text evidence="1">Amino-acid biosynthesis; L-lysine biosynthesis via DAP pathway; LL-2,6-diaminopimelate from (S)-tetrahydrodipicolinate (succinylase route): step 1/3.</text>
</comment>
<comment type="subcellular location">
    <subcellularLocation>
        <location evidence="1">Cytoplasm</location>
    </subcellularLocation>
</comment>
<comment type="similarity">
    <text evidence="1">Belongs to the transferase hexapeptide repeat family.</text>
</comment>
<proteinExistence type="inferred from homology"/>
<accession>B2JZ37</accession>
<sequence>MQQLQNVIETAFERRADITPANVDTVTREAITHVIDLLDTGALRVAEKIDGQWVTHQWLKKAVLLSFRINDNQVMEGAETRYYDKVPMKFAGYDEARFQHEGFRVVPPATVRKGAFIARNTVLMPSYVNIGAFVDEGTMVDTWATVGSCAQIGKNVHLSGGVGIGGVLEPLQANPTIIEDNCFVGARSEVVEGVIVEEGSVISMGVFIGQSTRIYDRETGEVHYGRVPAGSVVVSGNLPSKDGSYSLYCAVIVKKVDAKTRSKVGINELLRTID</sequence>
<protein>
    <recommendedName>
        <fullName evidence="1">2,3,4,5-tetrahydropyridine-2,6-dicarboxylate N-succinyltransferase</fullName>
        <ecNumber evidence="1">2.3.1.117</ecNumber>
    </recommendedName>
    <alternativeName>
        <fullName evidence="1">Tetrahydrodipicolinate N-succinyltransferase</fullName>
        <shortName evidence="1">THP succinyltransferase</shortName>
        <shortName evidence="1">Tetrahydropicolinate succinylase</shortName>
    </alternativeName>
</protein>
<gene>
    <name evidence="1" type="primary">dapD</name>
    <name type="ordered locus">YPTS_3126</name>
</gene>
<feature type="chain" id="PRO_1000134072" description="2,3,4,5-tetrahydropyridine-2,6-dicarboxylate N-succinyltransferase">
    <location>
        <begin position="1"/>
        <end position="274"/>
    </location>
</feature>
<keyword id="KW-0012">Acyltransferase</keyword>
<keyword id="KW-0028">Amino-acid biosynthesis</keyword>
<keyword id="KW-0963">Cytoplasm</keyword>
<keyword id="KW-0220">Diaminopimelate biosynthesis</keyword>
<keyword id="KW-0457">Lysine biosynthesis</keyword>
<keyword id="KW-0677">Repeat</keyword>
<keyword id="KW-0808">Transferase</keyword>
<evidence type="ECO:0000255" key="1">
    <source>
        <dbReference type="HAMAP-Rule" id="MF_00811"/>
    </source>
</evidence>
<organism>
    <name type="scientific">Yersinia pseudotuberculosis serotype IB (strain PB1/+)</name>
    <dbReference type="NCBI Taxonomy" id="502801"/>
    <lineage>
        <taxon>Bacteria</taxon>
        <taxon>Pseudomonadati</taxon>
        <taxon>Pseudomonadota</taxon>
        <taxon>Gammaproteobacteria</taxon>
        <taxon>Enterobacterales</taxon>
        <taxon>Yersiniaceae</taxon>
        <taxon>Yersinia</taxon>
    </lineage>
</organism>
<name>DAPD_YERPB</name>